<proteinExistence type="inferred from homology"/>
<keyword id="KW-1185">Reference proteome</keyword>
<organism>
    <name type="scientific">Caulobacter vibrioides (strain ATCC 19089 / CIP 103742 / CB 15)</name>
    <name type="common">Caulobacter crescentus</name>
    <dbReference type="NCBI Taxonomy" id="190650"/>
    <lineage>
        <taxon>Bacteria</taxon>
        <taxon>Pseudomonadati</taxon>
        <taxon>Pseudomonadota</taxon>
        <taxon>Alphaproteobacteria</taxon>
        <taxon>Caulobacterales</taxon>
        <taxon>Caulobacteraceae</taxon>
        <taxon>Caulobacter</taxon>
    </lineage>
</organism>
<dbReference type="EMBL" id="AE005673">
    <property type="protein sequence ID" value="AAK23453.1"/>
    <property type="molecule type" value="Genomic_DNA"/>
</dbReference>
<dbReference type="PIR" id="A87432">
    <property type="entry name" value="A87432"/>
</dbReference>
<dbReference type="RefSeq" id="NP_420285.1">
    <property type="nucleotide sequence ID" value="NC_002696.2"/>
</dbReference>
<dbReference type="RefSeq" id="WP_010919348.1">
    <property type="nucleotide sequence ID" value="NC_002696.2"/>
</dbReference>
<dbReference type="SMR" id="P58113"/>
<dbReference type="STRING" id="190650.CC_1473"/>
<dbReference type="EnsemblBacteria" id="AAK23453">
    <property type="protein sequence ID" value="AAK23453"/>
    <property type="gene ID" value="CC_1473"/>
</dbReference>
<dbReference type="KEGG" id="ccr:CC_1473"/>
<dbReference type="PATRIC" id="fig|190650.5.peg.1499"/>
<dbReference type="eggNOG" id="COG1741">
    <property type="taxonomic scope" value="Bacteria"/>
</dbReference>
<dbReference type="HOGENOM" id="CLU_064194_2_2_5"/>
<dbReference type="BioCyc" id="CAULO:CC1473-MONOMER"/>
<dbReference type="Proteomes" id="UP000001816">
    <property type="component" value="Chromosome"/>
</dbReference>
<dbReference type="CDD" id="cd02910">
    <property type="entry name" value="cupin_Yhhw_N"/>
    <property type="match status" value="1"/>
</dbReference>
<dbReference type="Gene3D" id="2.60.120.10">
    <property type="entry name" value="Jelly Rolls"/>
    <property type="match status" value="2"/>
</dbReference>
<dbReference type="InterPro" id="IPR012093">
    <property type="entry name" value="Pirin"/>
</dbReference>
<dbReference type="InterPro" id="IPR003829">
    <property type="entry name" value="Pirin_N_dom"/>
</dbReference>
<dbReference type="InterPro" id="IPR041602">
    <property type="entry name" value="Quercetinase_C"/>
</dbReference>
<dbReference type="InterPro" id="IPR014710">
    <property type="entry name" value="RmlC-like_jellyroll"/>
</dbReference>
<dbReference type="InterPro" id="IPR011051">
    <property type="entry name" value="RmlC_Cupin_sf"/>
</dbReference>
<dbReference type="PANTHER" id="PTHR43212">
    <property type="entry name" value="QUERCETIN 2,3-DIOXYGENASE"/>
    <property type="match status" value="1"/>
</dbReference>
<dbReference type="PANTHER" id="PTHR43212:SF3">
    <property type="entry name" value="QUERCETIN 2,3-DIOXYGENASE"/>
    <property type="match status" value="1"/>
</dbReference>
<dbReference type="Pfam" id="PF02678">
    <property type="entry name" value="Pirin"/>
    <property type="match status" value="1"/>
</dbReference>
<dbReference type="Pfam" id="PF17954">
    <property type="entry name" value="Pirin_C_2"/>
    <property type="match status" value="1"/>
</dbReference>
<dbReference type="PIRSF" id="PIRSF006232">
    <property type="entry name" value="Pirin"/>
    <property type="match status" value="1"/>
</dbReference>
<dbReference type="SUPFAM" id="SSF51182">
    <property type="entry name" value="RmlC-like cupins"/>
    <property type="match status" value="1"/>
</dbReference>
<sequence length="232" mass="25050">MIDRKPFDKLGGADHGWLKAKHHFSFASYYDPNNMNWGALRVWNDDEIAPNTGFPPHPHSDMEIITYVRDGAITHQDNLGNKGRTVAGDVQVMSAGSGIRHAEYNLEPETTRIFQIWIEPKSFGGAPSWGSKPFPKGDRSGKFVTLASGFSDDADALPIRTDARVLGATLKAGETTTYALGKDRSGYLVPAAGVVEVNGVRLNARDGAGIKDEAVITITALEDAELVLVDAA</sequence>
<evidence type="ECO:0000305" key="1"/>
<accession>P58113</accession>
<gene>
    <name type="ordered locus">CC_1473</name>
</gene>
<comment type="similarity">
    <text evidence="1">Belongs to the pirin family.</text>
</comment>
<reference key="1">
    <citation type="journal article" date="2001" name="Proc. Natl. Acad. Sci. U.S.A.">
        <title>Complete genome sequence of Caulobacter crescentus.</title>
        <authorList>
            <person name="Nierman W.C."/>
            <person name="Feldblyum T.V."/>
            <person name="Laub M.T."/>
            <person name="Paulsen I.T."/>
            <person name="Nelson K.E."/>
            <person name="Eisen J.A."/>
            <person name="Heidelberg J.F."/>
            <person name="Alley M.R.K."/>
            <person name="Ohta N."/>
            <person name="Maddock J.R."/>
            <person name="Potocka I."/>
            <person name="Nelson W.C."/>
            <person name="Newton A."/>
            <person name="Stephens C."/>
            <person name="Phadke N.D."/>
            <person name="Ely B."/>
            <person name="DeBoy R.T."/>
            <person name="Dodson R.J."/>
            <person name="Durkin A.S."/>
            <person name="Gwinn M.L."/>
            <person name="Haft D.H."/>
            <person name="Kolonay J.F."/>
            <person name="Smit J."/>
            <person name="Craven M.B."/>
            <person name="Khouri H.M."/>
            <person name="Shetty J."/>
            <person name="Berry K.J."/>
            <person name="Utterback T.R."/>
            <person name="Tran K."/>
            <person name="Wolf A.M."/>
            <person name="Vamathevan J.J."/>
            <person name="Ermolaeva M.D."/>
            <person name="White O."/>
            <person name="Salzberg S.L."/>
            <person name="Venter J.C."/>
            <person name="Shapiro L."/>
            <person name="Fraser C.M."/>
        </authorList>
    </citation>
    <scope>NUCLEOTIDE SEQUENCE [LARGE SCALE GENOMIC DNA]</scope>
    <source>
        <strain>ATCC 19089 / CIP 103742 / CB 15</strain>
    </source>
</reference>
<feature type="chain" id="PRO_0000214059" description="Pirin-like protein CC_1473">
    <location>
        <begin position="1"/>
        <end position="232"/>
    </location>
</feature>
<name>Y1473_CAUVC</name>
<protein>
    <recommendedName>
        <fullName>Pirin-like protein CC_1473</fullName>
    </recommendedName>
</protein>